<feature type="initiator methionine" description="Removed" evidence="4">
    <location>
        <position position="1"/>
    </location>
</feature>
<feature type="chain" id="PRO_0000394155" description="Probable bifunctional methylthioribulose-1-phosphate dehydratase/enolase-phosphatase E1">
    <location>
        <begin position="2"/>
        <end position="507"/>
    </location>
</feature>
<feature type="region of interest" description="Methylthioribulose-1-phosphate dehydratase" evidence="2">
    <location>
        <begin position="2"/>
        <end position="237"/>
    </location>
</feature>
<feature type="region of interest" description="Enolase-phosphatase E1" evidence="2">
    <location>
        <begin position="268"/>
        <end position="507"/>
    </location>
</feature>
<feature type="active site" description="Proton donor/acceptor" evidence="1 2">
    <location>
        <position position="152"/>
    </location>
</feature>
<feature type="binding site" evidence="1 2">
    <location>
        <position position="109"/>
    </location>
    <ligand>
        <name>substrate</name>
        <label>1</label>
        <note>for methylthioribulose-1-phosphate dehydratase activity</note>
    </ligand>
</feature>
<feature type="binding site" evidence="1 2">
    <location>
        <position position="127"/>
    </location>
    <ligand>
        <name>Zn(2+)</name>
        <dbReference type="ChEBI" id="CHEBI:29105"/>
    </ligand>
</feature>
<feature type="binding site" evidence="1 2">
    <location>
        <position position="129"/>
    </location>
    <ligand>
        <name>Zn(2+)</name>
        <dbReference type="ChEBI" id="CHEBI:29105"/>
    </ligand>
</feature>
<feature type="binding site" evidence="1 2">
    <location>
        <position position="202"/>
    </location>
    <ligand>
        <name>Zn(2+)</name>
        <dbReference type="ChEBI" id="CHEBI:29105"/>
    </ligand>
</feature>
<feature type="binding site" evidence="2">
    <location>
        <position position="271"/>
    </location>
    <ligand>
        <name>Mg(2+)</name>
        <dbReference type="ChEBI" id="CHEBI:18420"/>
    </ligand>
</feature>
<feature type="binding site" evidence="2">
    <location>
        <position position="273"/>
    </location>
    <ligand>
        <name>Mg(2+)</name>
        <dbReference type="ChEBI" id="CHEBI:18420"/>
    </ligand>
</feature>
<feature type="binding site" evidence="2">
    <location>
        <begin position="406"/>
        <end position="407"/>
    </location>
    <ligand>
        <name>substrate</name>
        <label>2</label>
        <note>for enolase-phosphatase activity</note>
    </ligand>
</feature>
<feature type="binding site" evidence="2">
    <location>
        <position position="440"/>
    </location>
    <ligand>
        <name>substrate</name>
        <label>2</label>
        <note>for enolase-phosphatase activity</note>
    </ligand>
</feature>
<feature type="binding site" evidence="2">
    <location>
        <position position="466"/>
    </location>
    <ligand>
        <name>Mg(2+)</name>
        <dbReference type="ChEBI" id="CHEBI:18420"/>
    </ligand>
</feature>
<feature type="modified residue" description="N-acetylalanine" evidence="4">
    <location>
        <position position="2"/>
    </location>
</feature>
<feature type="sequence conflict" description="In Ref. 4; BAF01056." evidence="3" ref="4">
    <original>P</original>
    <variation>S</variation>
    <location>
        <position position="192"/>
    </location>
</feature>
<name>MTBC_ARATH</name>
<accession>Q9FN41</accession>
<accession>Q0WP93</accession>
<gene>
    <name type="ordered locus">At5g53850</name>
    <name type="ORF">K19P17.1</name>
</gene>
<comment type="catalytic activity">
    <reaction evidence="2">
        <text>5-(methylsulfanyl)-D-ribulose 1-phosphate = 5-methylsulfanyl-2,3-dioxopentyl phosphate + H2O</text>
        <dbReference type="Rhea" id="RHEA:15549"/>
        <dbReference type="ChEBI" id="CHEBI:15377"/>
        <dbReference type="ChEBI" id="CHEBI:58548"/>
        <dbReference type="ChEBI" id="CHEBI:58828"/>
        <dbReference type="EC" id="4.2.1.109"/>
    </reaction>
</comment>
<comment type="catalytic activity">
    <reaction evidence="2">
        <text>5-methylsulfanyl-2,3-dioxopentyl phosphate + H2O = 1,2-dihydroxy-5-(methylsulfanyl)pent-1-en-3-one + phosphate</text>
        <dbReference type="Rhea" id="RHEA:21700"/>
        <dbReference type="ChEBI" id="CHEBI:15377"/>
        <dbReference type="ChEBI" id="CHEBI:43474"/>
        <dbReference type="ChEBI" id="CHEBI:49252"/>
        <dbReference type="ChEBI" id="CHEBI:58828"/>
        <dbReference type="EC" id="3.1.3.77"/>
    </reaction>
</comment>
<comment type="cofactor">
    <cofactor evidence="2">
        <name>Zn(2+)</name>
        <dbReference type="ChEBI" id="CHEBI:29105"/>
    </cofactor>
    <text evidence="2">Binds 1 zinc ion per subunit.</text>
</comment>
<comment type="cofactor">
    <cofactor evidence="2">
        <name>Mg(2+)</name>
        <dbReference type="ChEBI" id="CHEBI:18420"/>
    </cofactor>
    <text evidence="2">Binds 1 Mg(2+) ion per subunit.</text>
</comment>
<comment type="pathway">
    <text evidence="2">Amino-acid biosynthesis; L-methionine biosynthesis via salvage pathway; L-methionine from S-methyl-5-thio-alpha-D-ribose 1-phosphate: step 2/6.</text>
</comment>
<comment type="pathway">
    <text evidence="2">Amino-acid biosynthesis; L-methionine biosynthesis via salvage pathway; L-methionine from S-methyl-5-thio-alpha-D-ribose 1-phosphate: step 3/6.</text>
</comment>
<comment type="pathway">
    <text evidence="2">Amino-acid biosynthesis; L-methionine biosynthesis via salvage pathway; L-methionine from S-methyl-5-thio-alpha-D-ribose 1-phosphate: step 4/6.</text>
</comment>
<comment type="alternative products">
    <event type="alternative splicing"/>
    <isoform>
        <id>Q9FN41-1</id>
        <name>1</name>
        <sequence type="displayed"/>
    </isoform>
    <text>A number of isoforms are produced. According to EST sequences.</text>
</comment>
<comment type="similarity">
    <text evidence="2">In the N-terminal section; belongs to the aldolase class II family. MtnB subfamily.</text>
</comment>
<comment type="similarity">
    <text evidence="2">In the C-terminal section; belongs to the HAD-like hydrolase superfamily. MasA/MtnC family.</text>
</comment>
<protein>
    <recommendedName>
        <fullName evidence="2">Probable bifunctional methylthioribulose-1-phosphate dehydratase/enolase-phosphatase E1</fullName>
    </recommendedName>
    <domain>
        <recommendedName>
            <fullName evidence="2">Methylthioribulose-1-phosphate dehydratase</fullName>
            <shortName evidence="2">MTRu-1-P dehydratase</shortName>
            <ecNumber evidence="2">4.2.1.109</ecNumber>
        </recommendedName>
    </domain>
    <domain>
        <recommendedName>
            <fullName evidence="2">Enolase-phosphatase E1</fullName>
            <ecNumber evidence="2">3.1.3.77</ecNumber>
        </recommendedName>
        <alternativeName>
            <fullName evidence="2">2,3-diketo-5-methylthio-1-phosphopentane phosphatase</fullName>
        </alternativeName>
    </domain>
</protein>
<reference key="1">
    <citation type="journal article" date="1997" name="DNA Res.">
        <title>Structural analysis of Arabidopsis thaliana chromosome 5. III. Sequence features of the regions of 1,191,918 bp covered by seventeen physically assigned P1 clones.</title>
        <authorList>
            <person name="Nakamura Y."/>
            <person name="Sato S."/>
            <person name="Kaneko T."/>
            <person name="Kotani H."/>
            <person name="Asamizu E."/>
            <person name="Miyajima N."/>
            <person name="Tabata S."/>
        </authorList>
    </citation>
    <scope>NUCLEOTIDE SEQUENCE [LARGE SCALE GENOMIC DNA]</scope>
    <source>
        <strain>cv. Columbia</strain>
    </source>
</reference>
<reference key="2">
    <citation type="journal article" date="2017" name="Plant J.">
        <title>Araport11: a complete reannotation of the Arabidopsis thaliana reference genome.</title>
        <authorList>
            <person name="Cheng C.Y."/>
            <person name="Krishnakumar V."/>
            <person name="Chan A.P."/>
            <person name="Thibaud-Nissen F."/>
            <person name="Schobel S."/>
            <person name="Town C.D."/>
        </authorList>
    </citation>
    <scope>GENOME REANNOTATION</scope>
    <source>
        <strain>cv. Columbia</strain>
    </source>
</reference>
<reference key="3">
    <citation type="submission" date="2004-07" db="EMBL/GenBank/DDBJ databases">
        <title>Arabidopsis ORF clones.</title>
        <authorList>
            <person name="Cheuk R.F."/>
            <person name="Chen H."/>
            <person name="Kim C.J."/>
            <person name="Shinn P."/>
            <person name="Ecker J.R."/>
        </authorList>
    </citation>
    <scope>NUCLEOTIDE SEQUENCE [LARGE SCALE MRNA]</scope>
    <source>
        <strain>cv. Columbia</strain>
    </source>
</reference>
<reference key="4">
    <citation type="submission" date="2006-07" db="EMBL/GenBank/DDBJ databases">
        <title>Large-scale analysis of RIKEN Arabidopsis full-length (RAFL) cDNAs.</title>
        <authorList>
            <person name="Totoki Y."/>
            <person name="Seki M."/>
            <person name="Ishida J."/>
            <person name="Nakajima M."/>
            <person name="Enju A."/>
            <person name="Kamiya A."/>
            <person name="Narusaka M."/>
            <person name="Shin-i T."/>
            <person name="Nakagawa M."/>
            <person name="Sakamoto N."/>
            <person name="Oishi K."/>
            <person name="Kohara Y."/>
            <person name="Kobayashi M."/>
            <person name="Toyoda A."/>
            <person name="Sakaki Y."/>
            <person name="Sakurai T."/>
            <person name="Iida K."/>
            <person name="Akiyama K."/>
            <person name="Satou M."/>
            <person name="Toyoda T."/>
            <person name="Konagaya A."/>
            <person name="Carninci P."/>
            <person name="Kawai J."/>
            <person name="Hayashizaki Y."/>
            <person name="Shinozaki K."/>
        </authorList>
    </citation>
    <scope>NUCLEOTIDE SEQUENCE [LARGE SCALE MRNA]</scope>
    <source>
        <strain>cv. Columbia</strain>
    </source>
</reference>
<reference key="5">
    <citation type="journal article" date="2012" name="Mol. Cell. Proteomics">
        <title>Comparative large-scale characterisation of plant vs. mammal proteins reveals similar and idiosyncratic N-alpha acetylation features.</title>
        <authorList>
            <person name="Bienvenut W.V."/>
            <person name="Sumpton D."/>
            <person name="Martinez A."/>
            <person name="Lilla S."/>
            <person name="Espagne C."/>
            <person name="Meinnel T."/>
            <person name="Giglione C."/>
        </authorList>
    </citation>
    <scope>ACETYLATION [LARGE SCALE ANALYSIS] AT ALA-2</scope>
    <scope>CLEAVAGE OF INITIATOR METHIONINE [LARGE SCALE ANALYSIS]</scope>
    <scope>IDENTIFICATION BY MASS SPECTROMETRY [LARGE SCALE ANALYSIS]</scope>
</reference>
<proteinExistence type="evidence at protein level"/>
<evidence type="ECO:0000250" key="1">
    <source>
        <dbReference type="UniProtKB" id="Q96GX9"/>
    </source>
</evidence>
<evidence type="ECO:0000255" key="2">
    <source>
        <dbReference type="HAMAP-Rule" id="MF_03118"/>
    </source>
</evidence>
<evidence type="ECO:0000305" key="3"/>
<evidence type="ECO:0007744" key="4">
    <source>
    </source>
</evidence>
<dbReference type="EC" id="4.2.1.109" evidence="2"/>
<dbReference type="EC" id="3.1.3.77" evidence="2"/>
<dbReference type="EMBL" id="AB007644">
    <property type="protein sequence ID" value="BAB10715.1"/>
    <property type="molecule type" value="Genomic_DNA"/>
</dbReference>
<dbReference type="EMBL" id="CP002688">
    <property type="protein sequence ID" value="AED96413.1"/>
    <property type="molecule type" value="Genomic_DNA"/>
</dbReference>
<dbReference type="EMBL" id="BT012606">
    <property type="protein sequence ID" value="AAT06425.1"/>
    <property type="molecule type" value="mRNA"/>
</dbReference>
<dbReference type="EMBL" id="BT015100">
    <property type="protein sequence ID" value="AAT71972.1"/>
    <property type="molecule type" value="mRNA"/>
</dbReference>
<dbReference type="EMBL" id="AK229186">
    <property type="protein sequence ID" value="BAF01056.1"/>
    <property type="molecule type" value="mRNA"/>
</dbReference>
<dbReference type="RefSeq" id="NP_974931.1">
    <molecule id="Q9FN41-1"/>
    <property type="nucleotide sequence ID" value="NM_203202.3"/>
</dbReference>
<dbReference type="SMR" id="Q9FN41"/>
<dbReference type="BioGRID" id="20710">
    <property type="interactions" value="4"/>
</dbReference>
<dbReference type="FunCoup" id="Q9FN41">
    <property type="interactions" value="1417"/>
</dbReference>
<dbReference type="STRING" id="3702.Q9FN41"/>
<dbReference type="iPTMnet" id="Q9FN41"/>
<dbReference type="PaxDb" id="3702-AT5G53850.2"/>
<dbReference type="EnsemblPlants" id="AT5G53850.2">
    <molecule id="Q9FN41-1"/>
    <property type="protein sequence ID" value="AT5G53850.2"/>
    <property type="gene ID" value="AT5G53850"/>
</dbReference>
<dbReference type="GeneID" id="835466"/>
<dbReference type="Gramene" id="AT5G53850.2">
    <molecule id="Q9FN41-1"/>
    <property type="protein sequence ID" value="AT5G53850.2"/>
    <property type="gene ID" value="AT5G53850"/>
</dbReference>
<dbReference type="KEGG" id="ath:AT5G53850"/>
<dbReference type="Araport" id="AT5G53850"/>
<dbReference type="TAIR" id="AT5G53850">
    <property type="gene designation" value="DEP1"/>
</dbReference>
<dbReference type="eggNOG" id="KOG2630">
    <property type="taxonomic scope" value="Eukaryota"/>
</dbReference>
<dbReference type="eggNOG" id="KOG2631">
    <property type="taxonomic scope" value="Eukaryota"/>
</dbReference>
<dbReference type="HOGENOM" id="CLU_023273_3_1_1"/>
<dbReference type="InParanoid" id="Q9FN41"/>
<dbReference type="OrthoDB" id="191080at2759"/>
<dbReference type="PhylomeDB" id="Q9FN41"/>
<dbReference type="UniPathway" id="UPA00904">
    <property type="reaction ID" value="UER00875"/>
</dbReference>
<dbReference type="UniPathway" id="UPA00904">
    <property type="reaction ID" value="UER00876"/>
</dbReference>
<dbReference type="UniPathway" id="UPA00904">
    <property type="reaction ID" value="UER00877"/>
</dbReference>
<dbReference type="PRO" id="PR:Q9FN41"/>
<dbReference type="Proteomes" id="UP000006548">
    <property type="component" value="Chromosome 5"/>
</dbReference>
<dbReference type="ExpressionAtlas" id="Q9FN41">
    <property type="expression patterns" value="baseline and differential"/>
</dbReference>
<dbReference type="GO" id="GO:0009507">
    <property type="term" value="C:chloroplast"/>
    <property type="evidence" value="ECO:0007005"/>
    <property type="project" value="TAIR"/>
</dbReference>
<dbReference type="GO" id="GO:0009570">
    <property type="term" value="C:chloroplast stroma"/>
    <property type="evidence" value="ECO:0007005"/>
    <property type="project" value="TAIR"/>
</dbReference>
<dbReference type="GO" id="GO:0005829">
    <property type="term" value="C:cytosol"/>
    <property type="evidence" value="ECO:0007005"/>
    <property type="project" value="TAIR"/>
</dbReference>
<dbReference type="GO" id="GO:0009536">
    <property type="term" value="C:plastid"/>
    <property type="evidence" value="ECO:0007005"/>
    <property type="project" value="TAIR"/>
</dbReference>
<dbReference type="GO" id="GO:0043874">
    <property type="term" value="F:acireductone synthase activity"/>
    <property type="evidence" value="ECO:0007669"/>
    <property type="project" value="UniProtKB-EC"/>
</dbReference>
<dbReference type="GO" id="GO:0000287">
    <property type="term" value="F:magnesium ion binding"/>
    <property type="evidence" value="ECO:0007669"/>
    <property type="project" value="UniProtKB-UniRule"/>
</dbReference>
<dbReference type="GO" id="GO:0046570">
    <property type="term" value="F:methylthioribulose 1-phosphate dehydratase activity"/>
    <property type="evidence" value="ECO:0007669"/>
    <property type="project" value="UniProtKB-UniRule"/>
</dbReference>
<dbReference type="GO" id="GO:0008270">
    <property type="term" value="F:zinc ion binding"/>
    <property type="evidence" value="ECO:0007669"/>
    <property type="project" value="UniProtKB-UniRule"/>
</dbReference>
<dbReference type="GO" id="GO:0019509">
    <property type="term" value="P:L-methionine salvage from methylthioadenosine"/>
    <property type="evidence" value="ECO:0007669"/>
    <property type="project" value="UniProtKB-UniRule"/>
</dbReference>
<dbReference type="CDD" id="cd01629">
    <property type="entry name" value="HAD_EP"/>
    <property type="match status" value="1"/>
</dbReference>
<dbReference type="FunFam" id="1.10.720.60:FF:000001">
    <property type="entry name" value="Probable bifunctional methylthioribulose-1-phosphate dehydratase/enolase-phosphatase E1"/>
    <property type="match status" value="1"/>
</dbReference>
<dbReference type="FunFam" id="3.40.225.10:FF:000010">
    <property type="entry name" value="Probable bifunctional methylthioribulose-1-phosphate dehydratase/enolase-phosphatase E1"/>
    <property type="match status" value="1"/>
</dbReference>
<dbReference type="FunFam" id="3.40.50.1000:FF:000088">
    <property type="entry name" value="Probable bifunctional methylthioribulose-1-phosphate dehydratase/enolase-phosphatase E1"/>
    <property type="match status" value="1"/>
</dbReference>
<dbReference type="Gene3D" id="1.10.720.60">
    <property type="match status" value="1"/>
</dbReference>
<dbReference type="Gene3D" id="3.40.225.10">
    <property type="entry name" value="Class II aldolase/adducin N-terminal domain"/>
    <property type="match status" value="1"/>
</dbReference>
<dbReference type="Gene3D" id="3.40.50.1000">
    <property type="entry name" value="HAD superfamily/HAD-like"/>
    <property type="match status" value="1"/>
</dbReference>
<dbReference type="HAMAP" id="MF_03116">
    <property type="entry name" value="Salvage_MtnB_euk"/>
    <property type="match status" value="1"/>
</dbReference>
<dbReference type="HAMAP" id="MF_03118">
    <property type="entry name" value="Salvage_MtnBC"/>
    <property type="match status" value="1"/>
</dbReference>
<dbReference type="InterPro" id="IPR001303">
    <property type="entry name" value="Aldolase_II/adducin_N"/>
</dbReference>
<dbReference type="InterPro" id="IPR036409">
    <property type="entry name" value="Aldolase_II/adducin_N_sf"/>
</dbReference>
<dbReference type="InterPro" id="IPR023943">
    <property type="entry name" value="Enolase-ppase_E1"/>
</dbReference>
<dbReference type="InterPro" id="IPR036412">
    <property type="entry name" value="HAD-like_sf"/>
</dbReference>
<dbReference type="InterPro" id="IPR006439">
    <property type="entry name" value="HAD-SF_hydro_IA"/>
</dbReference>
<dbReference type="InterPro" id="IPR023214">
    <property type="entry name" value="HAD_sf"/>
</dbReference>
<dbReference type="InterPro" id="IPR017714">
    <property type="entry name" value="MethylthioRu-1-P_deHdtase_MtnB"/>
</dbReference>
<dbReference type="InterPro" id="IPR027505">
    <property type="entry name" value="MtnB_viridiplantae"/>
</dbReference>
<dbReference type="InterPro" id="IPR027514">
    <property type="entry name" value="Salvage_MtnB_euk"/>
</dbReference>
<dbReference type="NCBIfam" id="TIGR01691">
    <property type="entry name" value="enolase-ppase"/>
    <property type="match status" value="1"/>
</dbReference>
<dbReference type="NCBIfam" id="TIGR01549">
    <property type="entry name" value="HAD-SF-IA-v1"/>
    <property type="match status" value="1"/>
</dbReference>
<dbReference type="NCBIfam" id="TIGR03328">
    <property type="entry name" value="salvage_mtnB"/>
    <property type="match status" value="1"/>
</dbReference>
<dbReference type="PANTHER" id="PTHR20371">
    <property type="entry name" value="ENOLASE-PHOSPHATASE E1"/>
    <property type="match status" value="1"/>
</dbReference>
<dbReference type="PANTHER" id="PTHR20371:SF1">
    <property type="entry name" value="ENOLASE-PHOSPHATASE E1"/>
    <property type="match status" value="1"/>
</dbReference>
<dbReference type="Pfam" id="PF00596">
    <property type="entry name" value="Aldolase_II"/>
    <property type="match status" value="1"/>
</dbReference>
<dbReference type="Pfam" id="PF00702">
    <property type="entry name" value="Hydrolase"/>
    <property type="match status" value="1"/>
</dbReference>
<dbReference type="SFLD" id="SFLDG01133">
    <property type="entry name" value="C1.5.4:_Enolase-phosphatase_Li"/>
    <property type="match status" value="1"/>
</dbReference>
<dbReference type="SFLD" id="SFLDF00044">
    <property type="entry name" value="enolase-phosphatase"/>
    <property type="match status" value="1"/>
</dbReference>
<dbReference type="SMART" id="SM01007">
    <property type="entry name" value="Aldolase_II"/>
    <property type="match status" value="1"/>
</dbReference>
<dbReference type="SUPFAM" id="SSF53639">
    <property type="entry name" value="AraD/HMP-PK domain-like"/>
    <property type="match status" value="1"/>
</dbReference>
<dbReference type="SUPFAM" id="SSF56784">
    <property type="entry name" value="HAD-like"/>
    <property type="match status" value="1"/>
</dbReference>
<sequence>MAVAAAAMIGLPQAYLEGKEVKETSSLVTELCRHFYTQGWVSGTGGSITMKVHDASIPKPEQLIVMSPSGVQKERMQPEDMYILSANGSIISTPSPKPYPNKPPKCTDCAPLFMKAYEMRNAGAVIHSHGMESCLVTMLNPQAKEFRITHMEMIKGIQGHGYYDELVVPIIENTAYENELTDSLTKAIEAYPKATAVLVRNHGVYIWGDSWIHAKTQAECYHYLFDAAIKLHQLGLDAATPDHGPIRRTIHSQIKDSQYEREWPRRWIVLDIEGTTTPITFVTDVLFPYARENVGKHLNLTYHTAETQEDIKLLRAQVEEDLREGVTGAVPIPHADEGKEKVIAAMVSNVEAMIRADRKITALKELQGHIWRTGFECDELKAIVFEDVADALEKWHSSGIKVYIYSSGSRLAQKLLFGNTDYGDLRKYISGFFDTTIGNKKESRSYKEIKETLGVDDPAEIMFVTDVYQEAVAAKAAGLEAIISIRPGNAPLPENHGFKTVTSFSQI</sequence>
<keyword id="KW-0007">Acetylation</keyword>
<keyword id="KW-0025">Alternative splicing</keyword>
<keyword id="KW-0028">Amino-acid biosynthesis</keyword>
<keyword id="KW-0378">Hydrolase</keyword>
<keyword id="KW-0456">Lyase</keyword>
<keyword id="KW-0460">Magnesium</keyword>
<keyword id="KW-0479">Metal-binding</keyword>
<keyword id="KW-0486">Methionine biosynthesis</keyword>
<keyword id="KW-0511">Multifunctional enzyme</keyword>
<keyword id="KW-1185">Reference proteome</keyword>
<keyword id="KW-0862">Zinc</keyword>
<organism>
    <name type="scientific">Arabidopsis thaliana</name>
    <name type="common">Mouse-ear cress</name>
    <dbReference type="NCBI Taxonomy" id="3702"/>
    <lineage>
        <taxon>Eukaryota</taxon>
        <taxon>Viridiplantae</taxon>
        <taxon>Streptophyta</taxon>
        <taxon>Embryophyta</taxon>
        <taxon>Tracheophyta</taxon>
        <taxon>Spermatophyta</taxon>
        <taxon>Magnoliopsida</taxon>
        <taxon>eudicotyledons</taxon>
        <taxon>Gunneridae</taxon>
        <taxon>Pentapetalae</taxon>
        <taxon>rosids</taxon>
        <taxon>malvids</taxon>
        <taxon>Brassicales</taxon>
        <taxon>Brassicaceae</taxon>
        <taxon>Camelineae</taxon>
        <taxon>Arabidopsis</taxon>
    </lineage>
</organism>